<keyword id="KW-0378">Hydrolase</keyword>
<keyword id="KW-0479">Metal-binding</keyword>
<keyword id="KW-0482">Metalloprotease</keyword>
<keyword id="KW-0645">Protease</keyword>
<keyword id="KW-0862">Zinc</keyword>
<proteinExistence type="inferred from homology"/>
<accession>B7HE86</accession>
<dbReference type="EMBL" id="CP001176">
    <property type="protein sequence ID" value="ACK61363.1"/>
    <property type="molecule type" value="Genomic_DNA"/>
</dbReference>
<dbReference type="SMR" id="B7HE86"/>
<dbReference type="KEGG" id="bcb:BCB4264_A4572"/>
<dbReference type="HOGENOM" id="CLU_073529_0_2_9"/>
<dbReference type="Proteomes" id="UP000007096">
    <property type="component" value="Chromosome"/>
</dbReference>
<dbReference type="GO" id="GO:0046872">
    <property type="term" value="F:metal ion binding"/>
    <property type="evidence" value="ECO:0007669"/>
    <property type="project" value="UniProtKB-KW"/>
</dbReference>
<dbReference type="GO" id="GO:0008237">
    <property type="term" value="F:metallopeptidase activity"/>
    <property type="evidence" value="ECO:0007669"/>
    <property type="project" value="UniProtKB-KW"/>
</dbReference>
<dbReference type="GO" id="GO:0006508">
    <property type="term" value="P:proteolysis"/>
    <property type="evidence" value="ECO:0007669"/>
    <property type="project" value="UniProtKB-KW"/>
</dbReference>
<dbReference type="CDD" id="cd08071">
    <property type="entry name" value="MPN_DUF2466"/>
    <property type="match status" value="1"/>
</dbReference>
<dbReference type="Gene3D" id="3.40.140.10">
    <property type="entry name" value="Cytidine Deaminase, domain 2"/>
    <property type="match status" value="1"/>
</dbReference>
<dbReference type="InterPro" id="IPR037518">
    <property type="entry name" value="MPN"/>
</dbReference>
<dbReference type="InterPro" id="IPR025657">
    <property type="entry name" value="RadC_JAB"/>
</dbReference>
<dbReference type="InterPro" id="IPR010994">
    <property type="entry name" value="RuvA_2-like"/>
</dbReference>
<dbReference type="InterPro" id="IPR001405">
    <property type="entry name" value="UPF0758"/>
</dbReference>
<dbReference type="InterPro" id="IPR020891">
    <property type="entry name" value="UPF0758_CS"/>
</dbReference>
<dbReference type="InterPro" id="IPR046778">
    <property type="entry name" value="UPF0758_N"/>
</dbReference>
<dbReference type="NCBIfam" id="NF000642">
    <property type="entry name" value="PRK00024.1"/>
    <property type="match status" value="1"/>
</dbReference>
<dbReference type="NCBIfam" id="TIGR00608">
    <property type="entry name" value="radc"/>
    <property type="match status" value="1"/>
</dbReference>
<dbReference type="PANTHER" id="PTHR30471">
    <property type="entry name" value="DNA REPAIR PROTEIN RADC"/>
    <property type="match status" value="1"/>
</dbReference>
<dbReference type="PANTHER" id="PTHR30471:SF3">
    <property type="entry name" value="UPF0758 PROTEIN YEES-RELATED"/>
    <property type="match status" value="1"/>
</dbReference>
<dbReference type="Pfam" id="PF04002">
    <property type="entry name" value="RadC"/>
    <property type="match status" value="1"/>
</dbReference>
<dbReference type="Pfam" id="PF20582">
    <property type="entry name" value="UPF0758_N"/>
    <property type="match status" value="1"/>
</dbReference>
<dbReference type="SUPFAM" id="SSF102712">
    <property type="entry name" value="JAB1/MPN domain"/>
    <property type="match status" value="1"/>
</dbReference>
<dbReference type="SUPFAM" id="SSF47781">
    <property type="entry name" value="RuvA domain 2-like"/>
    <property type="match status" value="1"/>
</dbReference>
<dbReference type="PROSITE" id="PS50249">
    <property type="entry name" value="MPN"/>
    <property type="match status" value="1"/>
</dbReference>
<dbReference type="PROSITE" id="PS01302">
    <property type="entry name" value="UPF0758"/>
    <property type="match status" value="1"/>
</dbReference>
<name>Y4572_BACC4</name>
<sequence>MNGIRDVVREEQPRERLLLEGAGSLSNRELLAVLLRTGSKEETVLKLSDKILHQFDGLRMLKDATLEELISIHGIGISKASQLMAAFELGRRMVRLEYQNRYSIRSPEDCAKYMMEEMRFLQQEHFVCLYLNTKNQVIHRQTIFIGSLNTSIVHPREVFKEAFRRAAASIICLHNHPSGDPTPSREDIAVTKRLVECGQIIGIEVLDHIIIGDHKFVSLKEKGHI</sequence>
<reference key="1">
    <citation type="submission" date="2008-10" db="EMBL/GenBank/DDBJ databases">
        <title>Genome sequence of Bacillus cereus B4264.</title>
        <authorList>
            <person name="Dodson R.J."/>
            <person name="Durkin A.S."/>
            <person name="Rosovitz M.J."/>
            <person name="Rasko D.A."/>
            <person name="Hoffmaster A."/>
            <person name="Ravel J."/>
            <person name="Sutton G."/>
        </authorList>
    </citation>
    <scope>NUCLEOTIDE SEQUENCE [LARGE SCALE GENOMIC DNA]</scope>
    <source>
        <strain>B4264</strain>
    </source>
</reference>
<comment type="similarity">
    <text evidence="2">Belongs to the UPF0758 family.</text>
</comment>
<protein>
    <recommendedName>
        <fullName>UPF0758 protein BCB4264_A4572</fullName>
    </recommendedName>
</protein>
<evidence type="ECO:0000255" key="1">
    <source>
        <dbReference type="PROSITE-ProRule" id="PRU01182"/>
    </source>
</evidence>
<evidence type="ECO:0000305" key="2"/>
<feature type="chain" id="PRO_1000116351" description="UPF0758 protein BCB4264_A4572">
    <location>
        <begin position="1"/>
        <end position="225"/>
    </location>
</feature>
<feature type="domain" description="MPN" evidence="1">
    <location>
        <begin position="103"/>
        <end position="225"/>
    </location>
</feature>
<feature type="short sequence motif" description="JAMM motif" evidence="1">
    <location>
        <begin position="174"/>
        <end position="187"/>
    </location>
</feature>
<feature type="binding site" evidence="1">
    <location>
        <position position="174"/>
    </location>
    <ligand>
        <name>Zn(2+)</name>
        <dbReference type="ChEBI" id="CHEBI:29105"/>
        <note>catalytic</note>
    </ligand>
</feature>
<feature type="binding site" evidence="1">
    <location>
        <position position="176"/>
    </location>
    <ligand>
        <name>Zn(2+)</name>
        <dbReference type="ChEBI" id="CHEBI:29105"/>
        <note>catalytic</note>
    </ligand>
</feature>
<feature type="binding site" evidence="1">
    <location>
        <position position="187"/>
    </location>
    <ligand>
        <name>Zn(2+)</name>
        <dbReference type="ChEBI" id="CHEBI:29105"/>
        <note>catalytic</note>
    </ligand>
</feature>
<gene>
    <name type="ordered locus">BCB4264_A4572</name>
</gene>
<organism>
    <name type="scientific">Bacillus cereus (strain B4264)</name>
    <dbReference type="NCBI Taxonomy" id="405532"/>
    <lineage>
        <taxon>Bacteria</taxon>
        <taxon>Bacillati</taxon>
        <taxon>Bacillota</taxon>
        <taxon>Bacilli</taxon>
        <taxon>Bacillales</taxon>
        <taxon>Bacillaceae</taxon>
        <taxon>Bacillus</taxon>
        <taxon>Bacillus cereus group</taxon>
    </lineage>
</organism>